<proteinExistence type="inferred from homology"/>
<dbReference type="EC" id="2.1.3.3" evidence="2"/>
<dbReference type="EMBL" id="AE017285">
    <property type="protein sequence ID" value="AAS95576.1"/>
    <property type="molecule type" value="Genomic_DNA"/>
</dbReference>
<dbReference type="RefSeq" id="WP_010938395.1">
    <property type="nucleotide sequence ID" value="NC_002937.3"/>
</dbReference>
<dbReference type="RefSeq" id="YP_010317.1">
    <property type="nucleotide sequence ID" value="NC_002937.3"/>
</dbReference>
<dbReference type="SMR" id="Q72D35"/>
<dbReference type="IntAct" id="Q72D35">
    <property type="interactions" value="2"/>
</dbReference>
<dbReference type="STRING" id="882.DVU_1096"/>
<dbReference type="PaxDb" id="882-DVU_1096"/>
<dbReference type="EnsemblBacteria" id="AAS95576">
    <property type="protein sequence ID" value="AAS95576"/>
    <property type="gene ID" value="DVU_1096"/>
</dbReference>
<dbReference type="KEGG" id="dvu:DVU_1096"/>
<dbReference type="PATRIC" id="fig|882.5.peg.1034"/>
<dbReference type="eggNOG" id="COG0078">
    <property type="taxonomic scope" value="Bacteria"/>
</dbReference>
<dbReference type="HOGENOM" id="CLU_043846_3_2_7"/>
<dbReference type="OrthoDB" id="9802587at2"/>
<dbReference type="PhylomeDB" id="Q72D35"/>
<dbReference type="UniPathway" id="UPA00068">
    <property type="reaction ID" value="UER00112"/>
</dbReference>
<dbReference type="Proteomes" id="UP000002194">
    <property type="component" value="Chromosome"/>
</dbReference>
<dbReference type="GO" id="GO:0005737">
    <property type="term" value="C:cytoplasm"/>
    <property type="evidence" value="ECO:0007669"/>
    <property type="project" value="UniProtKB-SubCell"/>
</dbReference>
<dbReference type="GO" id="GO:0016597">
    <property type="term" value="F:amino acid binding"/>
    <property type="evidence" value="ECO:0007669"/>
    <property type="project" value="InterPro"/>
</dbReference>
<dbReference type="GO" id="GO:0004585">
    <property type="term" value="F:ornithine carbamoyltransferase activity"/>
    <property type="evidence" value="ECO:0007669"/>
    <property type="project" value="UniProtKB-UniRule"/>
</dbReference>
<dbReference type="GO" id="GO:0042450">
    <property type="term" value="P:arginine biosynthetic process via ornithine"/>
    <property type="evidence" value="ECO:0007669"/>
    <property type="project" value="TreeGrafter"/>
</dbReference>
<dbReference type="GO" id="GO:0019240">
    <property type="term" value="P:citrulline biosynthetic process"/>
    <property type="evidence" value="ECO:0007669"/>
    <property type="project" value="TreeGrafter"/>
</dbReference>
<dbReference type="GO" id="GO:0006526">
    <property type="term" value="P:L-arginine biosynthetic process"/>
    <property type="evidence" value="ECO:0007669"/>
    <property type="project" value="UniProtKB-UniRule"/>
</dbReference>
<dbReference type="FunFam" id="3.40.50.1370:FF:000008">
    <property type="entry name" value="Ornithine carbamoyltransferase"/>
    <property type="match status" value="1"/>
</dbReference>
<dbReference type="Gene3D" id="3.40.50.1370">
    <property type="entry name" value="Aspartate/ornithine carbamoyltransferase"/>
    <property type="match status" value="2"/>
</dbReference>
<dbReference type="HAMAP" id="MF_01109">
    <property type="entry name" value="OTCase"/>
    <property type="match status" value="1"/>
</dbReference>
<dbReference type="InterPro" id="IPR006132">
    <property type="entry name" value="Asp/Orn_carbamoyltranf_P-bd"/>
</dbReference>
<dbReference type="InterPro" id="IPR006130">
    <property type="entry name" value="Asp/Orn_carbamoylTrfase"/>
</dbReference>
<dbReference type="InterPro" id="IPR036901">
    <property type="entry name" value="Asp/Orn_carbamoylTrfase_sf"/>
</dbReference>
<dbReference type="InterPro" id="IPR006131">
    <property type="entry name" value="Asp_carbamoyltransf_Asp/Orn-bd"/>
</dbReference>
<dbReference type="InterPro" id="IPR002292">
    <property type="entry name" value="Orn/put_carbamltrans"/>
</dbReference>
<dbReference type="InterPro" id="IPR024904">
    <property type="entry name" value="OTCase_ArgI"/>
</dbReference>
<dbReference type="NCBIfam" id="TIGR00658">
    <property type="entry name" value="orni_carb_tr"/>
    <property type="match status" value="1"/>
</dbReference>
<dbReference type="NCBIfam" id="NF001986">
    <property type="entry name" value="PRK00779.1"/>
    <property type="match status" value="1"/>
</dbReference>
<dbReference type="PANTHER" id="PTHR45753">
    <property type="entry name" value="ORNITHINE CARBAMOYLTRANSFERASE, MITOCHONDRIAL"/>
    <property type="match status" value="1"/>
</dbReference>
<dbReference type="PANTHER" id="PTHR45753:SF3">
    <property type="entry name" value="ORNITHINE TRANSCARBAMYLASE, MITOCHONDRIAL"/>
    <property type="match status" value="1"/>
</dbReference>
<dbReference type="Pfam" id="PF00185">
    <property type="entry name" value="OTCace"/>
    <property type="match status" value="1"/>
</dbReference>
<dbReference type="Pfam" id="PF02729">
    <property type="entry name" value="OTCace_N"/>
    <property type="match status" value="1"/>
</dbReference>
<dbReference type="PRINTS" id="PR00100">
    <property type="entry name" value="AOTCASE"/>
</dbReference>
<dbReference type="PRINTS" id="PR00102">
    <property type="entry name" value="OTCASE"/>
</dbReference>
<dbReference type="SUPFAM" id="SSF53671">
    <property type="entry name" value="Aspartate/ornithine carbamoyltransferase"/>
    <property type="match status" value="1"/>
</dbReference>
<dbReference type="PROSITE" id="PS00097">
    <property type="entry name" value="CARBAMOYLTRANSFERASE"/>
    <property type="match status" value="1"/>
</dbReference>
<sequence>MPKHFTRIRDLGFEGAWKVLERAKEMKDTGYRGRTLEGKVATLIFEKASTRTRISFEVAVRHLGGTTIFMTPAESQLGRSEPLRDTARVISRYTDCMIVRTFGQAKIDELASFGSIPVVNALTDEGHPCQVMSDVLTMYERTPDLSQVRVAWIGDGNNMANSWIEAAMYFPFELFMAFPEGYEPDRQLLGLALEAGAKIFLTRDPHMAIDGAHYVNTDVWASMGQEEEQKRREAAFKGFCIDGALMGRAHPDAKFMHCLPAHRGEEVTDEVMESPASIVWDQAENRLHMQKAILEWVFTE</sequence>
<evidence type="ECO:0000250" key="1"/>
<evidence type="ECO:0000255" key="2">
    <source>
        <dbReference type="HAMAP-Rule" id="MF_01109"/>
    </source>
</evidence>
<accession>Q72D35</accession>
<reference key="1">
    <citation type="journal article" date="2004" name="Nat. Biotechnol.">
        <title>The genome sequence of the anaerobic, sulfate-reducing bacterium Desulfovibrio vulgaris Hildenborough.</title>
        <authorList>
            <person name="Heidelberg J.F."/>
            <person name="Seshadri R."/>
            <person name="Haveman S.A."/>
            <person name="Hemme C.L."/>
            <person name="Paulsen I.T."/>
            <person name="Kolonay J.F."/>
            <person name="Eisen J.A."/>
            <person name="Ward N.L."/>
            <person name="Methe B.A."/>
            <person name="Brinkac L.M."/>
            <person name="Daugherty S.C."/>
            <person name="DeBoy R.T."/>
            <person name="Dodson R.J."/>
            <person name="Durkin A.S."/>
            <person name="Madupu R."/>
            <person name="Nelson W.C."/>
            <person name="Sullivan S.A."/>
            <person name="Fouts D.E."/>
            <person name="Haft D.H."/>
            <person name="Selengut J."/>
            <person name="Peterson J.D."/>
            <person name="Davidsen T.M."/>
            <person name="Zafar N."/>
            <person name="Zhou L."/>
            <person name="Radune D."/>
            <person name="Dimitrov G."/>
            <person name="Hance M."/>
            <person name="Tran K."/>
            <person name="Khouri H.M."/>
            <person name="Gill J."/>
            <person name="Utterback T.R."/>
            <person name="Feldblyum T.V."/>
            <person name="Wall J.D."/>
            <person name="Voordouw G."/>
            <person name="Fraser C.M."/>
        </authorList>
    </citation>
    <scope>NUCLEOTIDE SEQUENCE [LARGE SCALE GENOMIC DNA]</scope>
    <source>
        <strain>ATCC 29579 / DSM 644 / CCUG 34227 / NCIMB 8303 / VKM B-1760 / Hildenborough</strain>
    </source>
</reference>
<keyword id="KW-0028">Amino-acid biosynthesis</keyword>
<keyword id="KW-0055">Arginine biosynthesis</keyword>
<keyword id="KW-0963">Cytoplasm</keyword>
<keyword id="KW-1185">Reference proteome</keyword>
<keyword id="KW-0808">Transferase</keyword>
<protein>
    <recommendedName>
        <fullName evidence="2">Ornithine carbamoyltransferase</fullName>
        <shortName evidence="2">OTCase</shortName>
        <ecNumber evidence="2">2.1.3.3</ecNumber>
    </recommendedName>
</protein>
<name>OTC_NITV2</name>
<gene>
    <name evidence="2" type="primary">argF</name>
    <name type="ordered locus">DVU_1096</name>
</gene>
<organism>
    <name type="scientific">Nitratidesulfovibrio vulgaris (strain ATCC 29579 / DSM 644 / CCUG 34227 / NCIMB 8303 / VKM B-1760 / Hildenborough)</name>
    <name type="common">Desulfovibrio vulgaris</name>
    <dbReference type="NCBI Taxonomy" id="882"/>
    <lineage>
        <taxon>Bacteria</taxon>
        <taxon>Pseudomonadati</taxon>
        <taxon>Thermodesulfobacteriota</taxon>
        <taxon>Desulfovibrionia</taxon>
        <taxon>Desulfovibrionales</taxon>
        <taxon>Desulfovibrionaceae</taxon>
        <taxon>Nitratidesulfovibrio</taxon>
    </lineage>
</organism>
<comment type="function">
    <text evidence="1">Reversibly catalyzes the transfer of the carbamoyl group from carbamoyl phosphate (CP) to the N(epsilon) atom of ornithine (ORN) to produce L-citrulline.</text>
</comment>
<comment type="catalytic activity">
    <reaction evidence="2">
        <text>carbamoyl phosphate + L-ornithine = L-citrulline + phosphate + H(+)</text>
        <dbReference type="Rhea" id="RHEA:19513"/>
        <dbReference type="ChEBI" id="CHEBI:15378"/>
        <dbReference type="ChEBI" id="CHEBI:43474"/>
        <dbReference type="ChEBI" id="CHEBI:46911"/>
        <dbReference type="ChEBI" id="CHEBI:57743"/>
        <dbReference type="ChEBI" id="CHEBI:58228"/>
        <dbReference type="EC" id="2.1.3.3"/>
    </reaction>
</comment>
<comment type="pathway">
    <text evidence="2">Amino-acid biosynthesis; L-arginine biosynthesis; L-arginine from L-ornithine and carbamoyl phosphate: step 1/3.</text>
</comment>
<comment type="subcellular location">
    <subcellularLocation>
        <location evidence="2">Cytoplasm</location>
    </subcellularLocation>
</comment>
<comment type="similarity">
    <text evidence="2">Belongs to the aspartate/ornithine carbamoyltransferase superfamily. OTCase family.</text>
</comment>
<feature type="chain" id="PRO_0000112917" description="Ornithine carbamoyltransferase">
    <location>
        <begin position="1"/>
        <end position="300"/>
    </location>
</feature>
<feature type="binding site" evidence="2">
    <location>
        <begin position="49"/>
        <end position="52"/>
    </location>
    <ligand>
        <name>carbamoyl phosphate</name>
        <dbReference type="ChEBI" id="CHEBI:58228"/>
    </ligand>
</feature>
<feature type="binding site" evidence="2">
    <location>
        <position position="76"/>
    </location>
    <ligand>
        <name>carbamoyl phosphate</name>
        <dbReference type="ChEBI" id="CHEBI:58228"/>
    </ligand>
</feature>
<feature type="binding site" evidence="2">
    <location>
        <position position="100"/>
    </location>
    <ligand>
        <name>carbamoyl phosphate</name>
        <dbReference type="ChEBI" id="CHEBI:58228"/>
    </ligand>
</feature>
<feature type="binding site" evidence="2">
    <location>
        <begin position="127"/>
        <end position="130"/>
    </location>
    <ligand>
        <name>carbamoyl phosphate</name>
        <dbReference type="ChEBI" id="CHEBI:58228"/>
    </ligand>
</feature>
<feature type="binding site" evidence="2">
    <location>
        <position position="158"/>
    </location>
    <ligand>
        <name>L-ornithine</name>
        <dbReference type="ChEBI" id="CHEBI:46911"/>
    </ligand>
</feature>
<feature type="binding site" evidence="2">
    <location>
        <position position="218"/>
    </location>
    <ligand>
        <name>L-ornithine</name>
        <dbReference type="ChEBI" id="CHEBI:46911"/>
    </ligand>
</feature>
<feature type="binding site" evidence="2">
    <location>
        <begin position="222"/>
        <end position="223"/>
    </location>
    <ligand>
        <name>L-ornithine</name>
        <dbReference type="ChEBI" id="CHEBI:46911"/>
    </ligand>
</feature>
<feature type="binding site" evidence="2">
    <location>
        <begin position="258"/>
        <end position="259"/>
    </location>
    <ligand>
        <name>carbamoyl phosphate</name>
        <dbReference type="ChEBI" id="CHEBI:58228"/>
    </ligand>
</feature>
<feature type="binding site" evidence="2">
    <location>
        <position position="286"/>
    </location>
    <ligand>
        <name>carbamoyl phosphate</name>
        <dbReference type="ChEBI" id="CHEBI:58228"/>
    </ligand>
</feature>